<sequence length="392" mass="41414">MNMRLGMPEAPAPGLAPRRITRQLMVGNVGVGSDHQISVQSMCITKTHDVNATLQQIAELTTAGCDIVRVACPRQEDADALAEIARHSKIPVIVDIHFQPKYIFAAIDAGCAAVRVNPGNIKEFDGRVGEVAKAAAAAGIPIRIGVNAGSLDKRFMDKYGKATSEALVESALWEASLFEEHGFGNIKISVKHHDPVVMVAAYEQLAAQCDYPLHLGVTEAGPVFQGTVKSAVAFGALLSKGIGDTIRVSLSAPPVEEIKVGNQILESLNLRPRSHEIVSCPSCGRAQVDVYKLANEVSAGLDGLEVPLRIAVMGCVVNGPGEARDADLGVASGNGKGQIFVKGEVIKTVPEAQIVETLIEEAMRLVSEMGTEKGSDHCSETTRSGSPVVTVN</sequence>
<evidence type="ECO:0000255" key="1">
    <source>
        <dbReference type="HAMAP-Rule" id="MF_00159"/>
    </source>
</evidence>
<evidence type="ECO:0000256" key="2">
    <source>
        <dbReference type="SAM" id="MobiDB-lite"/>
    </source>
</evidence>
<accession>Q9CBU5</accession>
<proteinExistence type="inferred from homology"/>
<reference key="1">
    <citation type="journal article" date="2001" name="Nature">
        <title>Massive gene decay in the leprosy bacillus.</title>
        <authorList>
            <person name="Cole S.T."/>
            <person name="Eiglmeier K."/>
            <person name="Parkhill J."/>
            <person name="James K.D."/>
            <person name="Thomson N.R."/>
            <person name="Wheeler P.R."/>
            <person name="Honore N."/>
            <person name="Garnier T."/>
            <person name="Churcher C.M."/>
            <person name="Harris D.E."/>
            <person name="Mungall K.L."/>
            <person name="Basham D."/>
            <person name="Brown D."/>
            <person name="Chillingworth T."/>
            <person name="Connor R."/>
            <person name="Davies R.M."/>
            <person name="Devlin K."/>
            <person name="Duthoy S."/>
            <person name="Feltwell T."/>
            <person name="Fraser A."/>
            <person name="Hamlin N."/>
            <person name="Holroyd S."/>
            <person name="Hornsby T."/>
            <person name="Jagels K."/>
            <person name="Lacroix C."/>
            <person name="Maclean J."/>
            <person name="Moule S."/>
            <person name="Murphy L.D."/>
            <person name="Oliver K."/>
            <person name="Quail M.A."/>
            <person name="Rajandream M.A."/>
            <person name="Rutherford K.M."/>
            <person name="Rutter S."/>
            <person name="Seeger K."/>
            <person name="Simon S."/>
            <person name="Simmonds M."/>
            <person name="Skelton J."/>
            <person name="Squares R."/>
            <person name="Squares S."/>
            <person name="Stevens K."/>
            <person name="Taylor K."/>
            <person name="Whitehead S."/>
            <person name="Woodward J.R."/>
            <person name="Barrell B.G."/>
        </authorList>
    </citation>
    <scope>NUCLEOTIDE SEQUENCE [LARGE SCALE GENOMIC DNA]</scope>
    <source>
        <strain>TN</strain>
    </source>
</reference>
<gene>
    <name evidence="1" type="primary">ispG</name>
    <name type="synonym">gcpE</name>
    <name type="ordered locus">ML1581</name>
</gene>
<keyword id="KW-0004">4Fe-4S</keyword>
<keyword id="KW-0408">Iron</keyword>
<keyword id="KW-0411">Iron-sulfur</keyword>
<keyword id="KW-0414">Isoprene biosynthesis</keyword>
<keyword id="KW-0479">Metal-binding</keyword>
<keyword id="KW-0560">Oxidoreductase</keyword>
<keyword id="KW-1185">Reference proteome</keyword>
<protein>
    <recommendedName>
        <fullName evidence="1">4-hydroxy-3-methylbut-2-en-1-yl diphosphate synthase (flavodoxin)</fullName>
        <ecNumber evidence="1">1.17.7.3</ecNumber>
    </recommendedName>
    <alternativeName>
        <fullName evidence="1">1-hydroxy-2-methyl-2-(E)-butenyl 4-diphosphate synthase</fullName>
    </alternativeName>
</protein>
<name>ISPG_MYCLE</name>
<dbReference type="EC" id="1.17.7.3" evidence="1"/>
<dbReference type="EMBL" id="AL583922">
    <property type="protein sequence ID" value="CAC30532.1"/>
    <property type="molecule type" value="Genomic_DNA"/>
</dbReference>
<dbReference type="PIR" id="G87106">
    <property type="entry name" value="G87106"/>
</dbReference>
<dbReference type="RefSeq" id="NP_302092.1">
    <property type="nucleotide sequence ID" value="NC_002677.1"/>
</dbReference>
<dbReference type="RefSeq" id="WP_010908413.1">
    <property type="nucleotide sequence ID" value="NC_002677.1"/>
</dbReference>
<dbReference type="SMR" id="Q9CBU5"/>
<dbReference type="STRING" id="272631.gene:17575422"/>
<dbReference type="KEGG" id="mle:ML1581"/>
<dbReference type="PATRIC" id="fig|272631.5.peg.2982"/>
<dbReference type="Leproma" id="ML1581"/>
<dbReference type="eggNOG" id="COG0821">
    <property type="taxonomic scope" value="Bacteria"/>
</dbReference>
<dbReference type="HOGENOM" id="CLU_042258_0_0_11"/>
<dbReference type="OrthoDB" id="9803214at2"/>
<dbReference type="UniPathway" id="UPA00056">
    <property type="reaction ID" value="UER00096"/>
</dbReference>
<dbReference type="Proteomes" id="UP000000806">
    <property type="component" value="Chromosome"/>
</dbReference>
<dbReference type="GO" id="GO:0051539">
    <property type="term" value="F:4 iron, 4 sulfur cluster binding"/>
    <property type="evidence" value="ECO:0007669"/>
    <property type="project" value="UniProtKB-UniRule"/>
</dbReference>
<dbReference type="GO" id="GO:0046429">
    <property type="term" value="F:4-hydroxy-3-methylbut-2-en-1-yl diphosphate synthase activity (ferredoxin)"/>
    <property type="evidence" value="ECO:0007669"/>
    <property type="project" value="UniProtKB-UniRule"/>
</dbReference>
<dbReference type="GO" id="GO:0141197">
    <property type="term" value="F:4-hydroxy-3-methylbut-2-enyl-diphosphate synthase activity (flavodoxin)"/>
    <property type="evidence" value="ECO:0007669"/>
    <property type="project" value="UniProtKB-EC"/>
</dbReference>
<dbReference type="GO" id="GO:0005506">
    <property type="term" value="F:iron ion binding"/>
    <property type="evidence" value="ECO:0007669"/>
    <property type="project" value="InterPro"/>
</dbReference>
<dbReference type="GO" id="GO:0019288">
    <property type="term" value="P:isopentenyl diphosphate biosynthetic process, methylerythritol 4-phosphate pathway"/>
    <property type="evidence" value="ECO:0007669"/>
    <property type="project" value="UniProtKB-UniRule"/>
</dbReference>
<dbReference type="GO" id="GO:0016114">
    <property type="term" value="P:terpenoid biosynthetic process"/>
    <property type="evidence" value="ECO:0007669"/>
    <property type="project" value="InterPro"/>
</dbReference>
<dbReference type="FunFam" id="3.20.20.20:FF:000001">
    <property type="entry name" value="4-hydroxy-3-methylbut-2-en-1-yl diphosphate synthase (flavodoxin)"/>
    <property type="match status" value="1"/>
</dbReference>
<dbReference type="Gene3D" id="3.20.20.20">
    <property type="entry name" value="Dihydropteroate synthase-like"/>
    <property type="match status" value="1"/>
</dbReference>
<dbReference type="Gene3D" id="3.30.413.10">
    <property type="entry name" value="Sulfite Reductase Hemoprotein, domain 1"/>
    <property type="match status" value="1"/>
</dbReference>
<dbReference type="HAMAP" id="MF_00159">
    <property type="entry name" value="IspG"/>
    <property type="match status" value="1"/>
</dbReference>
<dbReference type="InterPro" id="IPR011005">
    <property type="entry name" value="Dihydropteroate_synth-like_sf"/>
</dbReference>
<dbReference type="InterPro" id="IPR016425">
    <property type="entry name" value="IspG_bac"/>
</dbReference>
<dbReference type="InterPro" id="IPR004588">
    <property type="entry name" value="IspG_bac-typ"/>
</dbReference>
<dbReference type="InterPro" id="IPR045854">
    <property type="entry name" value="NO2/SO3_Rdtase_4Fe4S_sf"/>
</dbReference>
<dbReference type="NCBIfam" id="TIGR00612">
    <property type="entry name" value="ispG_gcpE"/>
    <property type="match status" value="1"/>
</dbReference>
<dbReference type="NCBIfam" id="NF001540">
    <property type="entry name" value="PRK00366.1"/>
    <property type="match status" value="1"/>
</dbReference>
<dbReference type="PANTHER" id="PTHR30454">
    <property type="entry name" value="4-HYDROXY-3-METHYLBUT-2-EN-1-YL DIPHOSPHATE SYNTHASE"/>
    <property type="match status" value="1"/>
</dbReference>
<dbReference type="PANTHER" id="PTHR30454:SF0">
    <property type="entry name" value="4-HYDROXY-3-METHYLBUT-2-EN-1-YL DIPHOSPHATE SYNTHASE (FERREDOXIN), CHLOROPLASTIC"/>
    <property type="match status" value="1"/>
</dbReference>
<dbReference type="Pfam" id="PF04551">
    <property type="entry name" value="GcpE"/>
    <property type="match status" value="1"/>
</dbReference>
<dbReference type="PIRSF" id="PIRSF004640">
    <property type="entry name" value="IspG"/>
    <property type="match status" value="1"/>
</dbReference>
<dbReference type="SUPFAM" id="SSF51717">
    <property type="entry name" value="Dihydropteroate synthetase-like"/>
    <property type="match status" value="1"/>
</dbReference>
<dbReference type="SUPFAM" id="SSF56014">
    <property type="entry name" value="Nitrite and sulphite reductase 4Fe-4S domain-like"/>
    <property type="match status" value="1"/>
</dbReference>
<feature type="chain" id="PRO_0000190601" description="4-hydroxy-3-methylbut-2-en-1-yl diphosphate synthase (flavodoxin)">
    <location>
        <begin position="1"/>
        <end position="392"/>
    </location>
</feature>
<feature type="region of interest" description="Disordered" evidence="2">
    <location>
        <begin position="371"/>
        <end position="392"/>
    </location>
</feature>
<feature type="compositionally biased region" description="Basic and acidic residues" evidence="2">
    <location>
        <begin position="371"/>
        <end position="380"/>
    </location>
</feature>
<feature type="compositionally biased region" description="Polar residues" evidence="2">
    <location>
        <begin position="381"/>
        <end position="392"/>
    </location>
</feature>
<feature type="binding site" evidence="1">
    <location>
        <position position="280"/>
    </location>
    <ligand>
        <name>[4Fe-4S] cluster</name>
        <dbReference type="ChEBI" id="CHEBI:49883"/>
    </ligand>
</feature>
<feature type="binding site" evidence="1">
    <location>
        <position position="283"/>
    </location>
    <ligand>
        <name>[4Fe-4S] cluster</name>
        <dbReference type="ChEBI" id="CHEBI:49883"/>
    </ligand>
</feature>
<feature type="binding site" evidence="1">
    <location>
        <position position="315"/>
    </location>
    <ligand>
        <name>[4Fe-4S] cluster</name>
        <dbReference type="ChEBI" id="CHEBI:49883"/>
    </ligand>
</feature>
<feature type="binding site" evidence="1">
    <location>
        <position position="322"/>
    </location>
    <ligand>
        <name>[4Fe-4S] cluster</name>
        <dbReference type="ChEBI" id="CHEBI:49883"/>
    </ligand>
</feature>
<organism>
    <name type="scientific">Mycobacterium leprae (strain TN)</name>
    <dbReference type="NCBI Taxonomy" id="272631"/>
    <lineage>
        <taxon>Bacteria</taxon>
        <taxon>Bacillati</taxon>
        <taxon>Actinomycetota</taxon>
        <taxon>Actinomycetes</taxon>
        <taxon>Mycobacteriales</taxon>
        <taxon>Mycobacteriaceae</taxon>
        <taxon>Mycobacterium</taxon>
    </lineage>
</organism>
<comment type="function">
    <text evidence="1">Converts 2C-methyl-D-erythritol 2,4-cyclodiphosphate (ME-2,4cPP) into 1-hydroxy-2-methyl-2-(E)-butenyl 4-diphosphate.</text>
</comment>
<comment type="catalytic activity">
    <reaction evidence="1">
        <text>(2E)-4-hydroxy-3-methylbut-2-enyl diphosphate + oxidized [flavodoxin] + H2O + 2 H(+) = 2-C-methyl-D-erythritol 2,4-cyclic diphosphate + reduced [flavodoxin]</text>
        <dbReference type="Rhea" id="RHEA:43604"/>
        <dbReference type="Rhea" id="RHEA-COMP:10622"/>
        <dbReference type="Rhea" id="RHEA-COMP:10623"/>
        <dbReference type="ChEBI" id="CHEBI:15377"/>
        <dbReference type="ChEBI" id="CHEBI:15378"/>
        <dbReference type="ChEBI" id="CHEBI:57618"/>
        <dbReference type="ChEBI" id="CHEBI:58210"/>
        <dbReference type="ChEBI" id="CHEBI:58483"/>
        <dbReference type="ChEBI" id="CHEBI:128753"/>
        <dbReference type="EC" id="1.17.7.3"/>
    </reaction>
</comment>
<comment type="cofactor">
    <cofactor evidence="1">
        <name>[4Fe-4S] cluster</name>
        <dbReference type="ChEBI" id="CHEBI:49883"/>
    </cofactor>
    <text evidence="1">Binds 1 [4Fe-4S] cluster.</text>
</comment>
<comment type="pathway">
    <text evidence="1">Isoprenoid biosynthesis; isopentenyl diphosphate biosynthesis via DXP pathway; isopentenyl diphosphate from 1-deoxy-D-xylulose 5-phosphate: step 5/6.</text>
</comment>
<comment type="similarity">
    <text evidence="1">Belongs to the IspG family.</text>
</comment>